<protein>
    <recommendedName>
        <fullName>3,4-dihydroxy-2-butanone 4-phosphate synthase</fullName>
        <shortName>DHBP synthase</shortName>
        <ecNumber>4.1.99.12</ecNumber>
    </recommendedName>
</protein>
<comment type="function">
    <text evidence="1">Catalyzes the conversion of D-ribulose 5-phosphate to formate and 3,4-dihydroxy-2-butanone 4-phosphate.</text>
</comment>
<comment type="catalytic activity">
    <reaction>
        <text>D-ribulose 5-phosphate = (2S)-2-hydroxy-3-oxobutyl phosphate + formate + H(+)</text>
        <dbReference type="Rhea" id="RHEA:18457"/>
        <dbReference type="ChEBI" id="CHEBI:15378"/>
        <dbReference type="ChEBI" id="CHEBI:15740"/>
        <dbReference type="ChEBI" id="CHEBI:58121"/>
        <dbReference type="ChEBI" id="CHEBI:58830"/>
        <dbReference type="EC" id="4.1.99.12"/>
    </reaction>
</comment>
<comment type="cofactor">
    <cofactor evidence="1">
        <name>Mg(2+)</name>
        <dbReference type="ChEBI" id="CHEBI:18420"/>
    </cofactor>
    <cofactor evidence="1">
        <name>Mn(2+)</name>
        <dbReference type="ChEBI" id="CHEBI:29035"/>
    </cofactor>
    <text evidence="1">Binds 2 divalent metal cations per subunit. Magnesium or manganese.</text>
</comment>
<comment type="pathway">
    <text>Cofactor biosynthesis; riboflavin biosynthesis; 2-hydroxy-3-oxobutyl phosphate from D-ribulose 5-phosphate: step 1/1.</text>
</comment>
<comment type="similarity">
    <text evidence="2">In the N-terminal section; belongs to the DHBP synthase family.</text>
</comment>
<comment type="similarity">
    <text evidence="2">In the C-terminal section; belongs to the GTP cyclohydrolase II family.</text>
</comment>
<organism>
    <name type="scientific">Helicobacter pylori (strain ATCC 700392 / 26695)</name>
    <name type="common">Campylobacter pylori</name>
    <dbReference type="NCBI Taxonomy" id="85962"/>
    <lineage>
        <taxon>Bacteria</taxon>
        <taxon>Pseudomonadati</taxon>
        <taxon>Campylobacterota</taxon>
        <taxon>Epsilonproteobacteria</taxon>
        <taxon>Campylobacterales</taxon>
        <taxon>Helicobacteraceae</taxon>
        <taxon>Helicobacter</taxon>
    </lineage>
</organism>
<name>RIBB_HELPY</name>
<proteinExistence type="inferred from homology"/>
<dbReference type="EC" id="4.1.99.12"/>
<dbReference type="EMBL" id="AE000511">
    <property type="protein sequence ID" value="AAD07852.1"/>
    <property type="molecule type" value="Genomic_DNA"/>
</dbReference>
<dbReference type="PIR" id="D64620">
    <property type="entry name" value="D64620"/>
</dbReference>
<dbReference type="RefSeq" id="NP_207597.1">
    <property type="nucleotide sequence ID" value="NC_000915.1"/>
</dbReference>
<dbReference type="RefSeq" id="WP_000601458.1">
    <property type="nucleotide sequence ID" value="NC_018939.1"/>
</dbReference>
<dbReference type="SMR" id="O25484"/>
<dbReference type="FunCoup" id="O25484">
    <property type="interactions" value="270"/>
</dbReference>
<dbReference type="STRING" id="85962.HP_0804"/>
<dbReference type="PaxDb" id="85962-C694_04120"/>
<dbReference type="EnsemblBacteria" id="AAD07852">
    <property type="protein sequence ID" value="AAD07852"/>
    <property type="gene ID" value="HP_0804"/>
</dbReference>
<dbReference type="KEGG" id="heo:C694_04120"/>
<dbReference type="KEGG" id="hpy:HP_0804"/>
<dbReference type="PATRIC" id="fig|85962.47.peg.856"/>
<dbReference type="eggNOG" id="COG0108">
    <property type="taxonomic scope" value="Bacteria"/>
</dbReference>
<dbReference type="eggNOG" id="COG0807">
    <property type="taxonomic scope" value="Bacteria"/>
</dbReference>
<dbReference type="InParanoid" id="O25484"/>
<dbReference type="OrthoDB" id="9793111at2"/>
<dbReference type="PhylomeDB" id="O25484"/>
<dbReference type="UniPathway" id="UPA00275">
    <property type="reaction ID" value="UER00399"/>
</dbReference>
<dbReference type="Proteomes" id="UP000000429">
    <property type="component" value="Chromosome"/>
</dbReference>
<dbReference type="GO" id="GO:0005829">
    <property type="term" value="C:cytosol"/>
    <property type="evidence" value="ECO:0000318"/>
    <property type="project" value="GO_Central"/>
</dbReference>
<dbReference type="GO" id="GO:0008686">
    <property type="term" value="F:3,4-dihydroxy-2-butanone-4-phosphate synthase activity"/>
    <property type="evidence" value="ECO:0007669"/>
    <property type="project" value="UniProtKB-UniRule"/>
</dbReference>
<dbReference type="GO" id="GO:0003935">
    <property type="term" value="F:GTP cyclohydrolase II activity"/>
    <property type="evidence" value="ECO:0000318"/>
    <property type="project" value="GO_Central"/>
</dbReference>
<dbReference type="GO" id="GO:0000287">
    <property type="term" value="F:magnesium ion binding"/>
    <property type="evidence" value="ECO:0007669"/>
    <property type="project" value="UniProtKB-UniRule"/>
</dbReference>
<dbReference type="GO" id="GO:0030145">
    <property type="term" value="F:manganese ion binding"/>
    <property type="evidence" value="ECO:0007669"/>
    <property type="project" value="UniProtKB-UniRule"/>
</dbReference>
<dbReference type="GO" id="GO:0009231">
    <property type="term" value="P:riboflavin biosynthetic process"/>
    <property type="evidence" value="ECO:0000318"/>
    <property type="project" value="GO_Central"/>
</dbReference>
<dbReference type="FunFam" id="3.90.870.10:FF:000001">
    <property type="entry name" value="Riboflavin biosynthesis protein RibBA"/>
    <property type="match status" value="1"/>
</dbReference>
<dbReference type="Gene3D" id="3.90.870.10">
    <property type="entry name" value="DHBP synthase"/>
    <property type="match status" value="1"/>
</dbReference>
<dbReference type="Gene3D" id="3.40.50.10990">
    <property type="entry name" value="GTP cyclohydrolase II"/>
    <property type="match status" value="1"/>
</dbReference>
<dbReference type="HAMAP" id="MF_00180">
    <property type="entry name" value="RibB"/>
    <property type="match status" value="1"/>
</dbReference>
<dbReference type="InterPro" id="IPR017945">
    <property type="entry name" value="DHBP_synth_RibB-like_a/b_dom"/>
</dbReference>
<dbReference type="InterPro" id="IPR000422">
    <property type="entry name" value="DHBP_synthase_RibB"/>
</dbReference>
<dbReference type="InterPro" id="IPR032677">
    <property type="entry name" value="GTP_cyclohydro_II"/>
</dbReference>
<dbReference type="InterPro" id="IPR036144">
    <property type="entry name" value="RibA-like_sf"/>
</dbReference>
<dbReference type="NCBIfam" id="NF006804">
    <property type="entry name" value="PRK09314.1"/>
    <property type="match status" value="1"/>
</dbReference>
<dbReference type="NCBIfam" id="TIGR00506">
    <property type="entry name" value="ribB"/>
    <property type="match status" value="1"/>
</dbReference>
<dbReference type="PANTHER" id="PTHR21327:SF18">
    <property type="entry name" value="3,4-DIHYDROXY-2-BUTANONE 4-PHOSPHATE SYNTHASE"/>
    <property type="match status" value="1"/>
</dbReference>
<dbReference type="PANTHER" id="PTHR21327">
    <property type="entry name" value="GTP CYCLOHYDROLASE II-RELATED"/>
    <property type="match status" value="1"/>
</dbReference>
<dbReference type="Pfam" id="PF00926">
    <property type="entry name" value="DHBP_synthase"/>
    <property type="match status" value="1"/>
</dbReference>
<dbReference type="Pfam" id="PF00925">
    <property type="entry name" value="GTP_cyclohydro2"/>
    <property type="match status" value="1"/>
</dbReference>
<dbReference type="PIRSF" id="PIRSF001259">
    <property type="entry name" value="RibA"/>
    <property type="match status" value="1"/>
</dbReference>
<dbReference type="SUPFAM" id="SSF142695">
    <property type="entry name" value="RibA-like"/>
    <property type="match status" value="1"/>
</dbReference>
<dbReference type="SUPFAM" id="SSF55821">
    <property type="entry name" value="YrdC/RibB"/>
    <property type="match status" value="1"/>
</dbReference>
<gene>
    <name type="primary">ribB</name>
    <name type="ordered locus">HP_0804</name>
</gene>
<sequence>MILKRVTEALEAYKNGEMLIVMDDEDRENEGDLVLAGIFSTPEKINFMATHARGLICVSLTKDLAKKFELPPMVSVNDSNHETAFTVSIDAKEARTGISAFERHLTIELLCKDTTKPSDFVRPGHIFPLIAKDGGVLARTGHTEASVDLCKLAGLKPVSVICEIMKEDGSMARRGDKFLSDFALKHNLKTLYVSDLISYRLENESLLKMFCQEEREFLKHQTQCYTFLDHQQKNHYAFKFKGAKTHDLAPLVRFHPIKEDFDFLTTDAFEVFFKALEYLKHEGGYLIFMNTHSKENNVVKDFGIGALVLKNLGIKDFRLLSSCEDRQYKALSGFGLKLVETISL</sequence>
<accession>O25484</accession>
<keyword id="KW-0456">Lyase</keyword>
<keyword id="KW-0460">Magnesium</keyword>
<keyword id="KW-0464">Manganese</keyword>
<keyword id="KW-0479">Metal-binding</keyword>
<keyword id="KW-1185">Reference proteome</keyword>
<keyword id="KW-0686">Riboflavin biosynthesis</keyword>
<feature type="chain" id="PRO_0000151802" description="3,4-dihydroxy-2-butanone 4-phosphate synthase">
    <location>
        <begin position="1"/>
        <end position="344"/>
    </location>
</feature>
<feature type="region of interest" description="DHBP synthase">
    <location>
        <begin position="1"/>
        <end position="202"/>
    </location>
</feature>
<feature type="region of interest" description="GTP cyclohydrolase II-like">
    <location>
        <begin position="203"/>
        <end position="344"/>
    </location>
</feature>
<feature type="binding site" evidence="1">
    <location>
        <begin position="27"/>
        <end position="28"/>
    </location>
    <ligand>
        <name>D-ribulose 5-phosphate</name>
        <dbReference type="ChEBI" id="CHEBI:58121"/>
    </ligand>
</feature>
<feature type="binding site" evidence="1">
    <location>
        <position position="28"/>
    </location>
    <ligand>
        <name>Mg(2+)</name>
        <dbReference type="ChEBI" id="CHEBI:18420"/>
        <label>1</label>
    </ligand>
</feature>
<feature type="binding site" evidence="1">
    <location>
        <position position="28"/>
    </location>
    <ligand>
        <name>Mg(2+)</name>
        <dbReference type="ChEBI" id="CHEBI:18420"/>
        <label>2</label>
    </ligand>
</feature>
<feature type="binding site" evidence="1">
    <location>
        <position position="32"/>
    </location>
    <ligand>
        <name>D-ribulose 5-phosphate</name>
        <dbReference type="ChEBI" id="CHEBI:58121"/>
    </ligand>
</feature>
<feature type="binding site" evidence="1">
    <location>
        <begin position="139"/>
        <end position="143"/>
    </location>
    <ligand>
        <name>D-ribulose 5-phosphate</name>
        <dbReference type="ChEBI" id="CHEBI:58121"/>
    </ligand>
</feature>
<feature type="binding site" evidence="1">
    <location>
        <position position="142"/>
    </location>
    <ligand>
        <name>Mg(2+)</name>
        <dbReference type="ChEBI" id="CHEBI:18420"/>
        <label>2</label>
    </ligand>
</feature>
<feature type="binding site" evidence="1">
    <location>
        <position position="163"/>
    </location>
    <ligand>
        <name>D-ribulose 5-phosphate</name>
        <dbReference type="ChEBI" id="CHEBI:58121"/>
    </ligand>
</feature>
<feature type="site" description="Essential for catalytic activity" evidence="1">
    <location>
        <position position="125"/>
    </location>
</feature>
<feature type="site" description="Essential for catalytic activity" evidence="1">
    <location>
        <position position="163"/>
    </location>
</feature>
<reference key="1">
    <citation type="journal article" date="1997" name="Nature">
        <title>The complete genome sequence of the gastric pathogen Helicobacter pylori.</title>
        <authorList>
            <person name="Tomb J.-F."/>
            <person name="White O."/>
            <person name="Kerlavage A.R."/>
            <person name="Clayton R.A."/>
            <person name="Sutton G.G."/>
            <person name="Fleischmann R.D."/>
            <person name="Ketchum K.A."/>
            <person name="Klenk H.-P."/>
            <person name="Gill S.R."/>
            <person name="Dougherty B.A."/>
            <person name="Nelson K.E."/>
            <person name="Quackenbush J."/>
            <person name="Zhou L."/>
            <person name="Kirkness E.F."/>
            <person name="Peterson S.N."/>
            <person name="Loftus B.J."/>
            <person name="Richardson D.L."/>
            <person name="Dodson R.J."/>
            <person name="Khalak H.G."/>
            <person name="Glodek A."/>
            <person name="McKenney K."/>
            <person name="FitzGerald L.M."/>
            <person name="Lee N."/>
            <person name="Adams M.D."/>
            <person name="Hickey E.K."/>
            <person name="Berg D.E."/>
            <person name="Gocayne J.D."/>
            <person name="Utterback T.R."/>
            <person name="Peterson J.D."/>
            <person name="Kelley J.M."/>
            <person name="Cotton M.D."/>
            <person name="Weidman J.F."/>
            <person name="Fujii C."/>
            <person name="Bowman C."/>
            <person name="Watthey L."/>
            <person name="Wallin E."/>
            <person name="Hayes W.S."/>
            <person name="Borodovsky M."/>
            <person name="Karp P.D."/>
            <person name="Smith H.O."/>
            <person name="Fraser C.M."/>
            <person name="Venter J.C."/>
        </authorList>
    </citation>
    <scope>NUCLEOTIDE SEQUENCE [LARGE SCALE GENOMIC DNA]</scope>
    <source>
        <strain>ATCC 700392 / 26695</strain>
    </source>
</reference>
<evidence type="ECO:0000250" key="1"/>
<evidence type="ECO:0000305" key="2"/>